<name>HEM1_RHOBA</name>
<dbReference type="EC" id="1.2.1.70" evidence="1"/>
<dbReference type="EMBL" id="BX294150">
    <property type="protein sequence ID" value="CAD76488.1"/>
    <property type="molecule type" value="Genomic_DNA"/>
</dbReference>
<dbReference type="RefSeq" id="NP_869102.1">
    <property type="nucleotide sequence ID" value="NC_005027.1"/>
</dbReference>
<dbReference type="RefSeq" id="WP_007334460.1">
    <property type="nucleotide sequence ID" value="NC_005027.1"/>
</dbReference>
<dbReference type="SMR" id="Q7UKZ2"/>
<dbReference type="FunCoup" id="Q7UKZ2">
    <property type="interactions" value="321"/>
</dbReference>
<dbReference type="STRING" id="243090.RB9848"/>
<dbReference type="EnsemblBacteria" id="CAD76488">
    <property type="protein sequence ID" value="CAD76488"/>
    <property type="gene ID" value="RB9848"/>
</dbReference>
<dbReference type="KEGG" id="rba:RB9848"/>
<dbReference type="PATRIC" id="fig|243090.15.peg.4739"/>
<dbReference type="eggNOG" id="COG0373">
    <property type="taxonomic scope" value="Bacteria"/>
</dbReference>
<dbReference type="HOGENOM" id="CLU_035113_2_2_0"/>
<dbReference type="InParanoid" id="Q7UKZ2"/>
<dbReference type="OrthoDB" id="110209at2"/>
<dbReference type="UniPathway" id="UPA00251">
    <property type="reaction ID" value="UER00316"/>
</dbReference>
<dbReference type="Proteomes" id="UP000001025">
    <property type="component" value="Chromosome"/>
</dbReference>
<dbReference type="GO" id="GO:0008883">
    <property type="term" value="F:glutamyl-tRNA reductase activity"/>
    <property type="evidence" value="ECO:0007669"/>
    <property type="project" value="UniProtKB-UniRule"/>
</dbReference>
<dbReference type="GO" id="GO:0050661">
    <property type="term" value="F:NADP binding"/>
    <property type="evidence" value="ECO:0007669"/>
    <property type="project" value="InterPro"/>
</dbReference>
<dbReference type="GO" id="GO:0006782">
    <property type="term" value="P:protoporphyrinogen IX biosynthetic process"/>
    <property type="evidence" value="ECO:0007669"/>
    <property type="project" value="UniProtKB-UniRule"/>
</dbReference>
<dbReference type="CDD" id="cd05213">
    <property type="entry name" value="NAD_bind_Glutamyl_tRNA_reduct"/>
    <property type="match status" value="1"/>
</dbReference>
<dbReference type="FunFam" id="3.30.460.30:FF:000001">
    <property type="entry name" value="Glutamyl-tRNA reductase"/>
    <property type="match status" value="1"/>
</dbReference>
<dbReference type="Gene3D" id="3.30.460.30">
    <property type="entry name" value="Glutamyl-tRNA reductase, N-terminal domain"/>
    <property type="match status" value="1"/>
</dbReference>
<dbReference type="Gene3D" id="3.40.50.720">
    <property type="entry name" value="NAD(P)-binding Rossmann-like Domain"/>
    <property type="match status" value="1"/>
</dbReference>
<dbReference type="HAMAP" id="MF_00087">
    <property type="entry name" value="Glu_tRNA_reductase"/>
    <property type="match status" value="1"/>
</dbReference>
<dbReference type="InterPro" id="IPR000343">
    <property type="entry name" value="4pyrrol_synth_GluRdtase"/>
</dbReference>
<dbReference type="InterPro" id="IPR015896">
    <property type="entry name" value="4pyrrol_synth_GluRdtase_dimer"/>
</dbReference>
<dbReference type="InterPro" id="IPR015895">
    <property type="entry name" value="4pyrrol_synth_GluRdtase_N"/>
</dbReference>
<dbReference type="InterPro" id="IPR018214">
    <property type="entry name" value="GluRdtase_CS"/>
</dbReference>
<dbReference type="InterPro" id="IPR036453">
    <property type="entry name" value="GluRdtase_dimer_dom_sf"/>
</dbReference>
<dbReference type="InterPro" id="IPR036343">
    <property type="entry name" value="GluRdtase_N_sf"/>
</dbReference>
<dbReference type="InterPro" id="IPR036291">
    <property type="entry name" value="NAD(P)-bd_dom_sf"/>
</dbReference>
<dbReference type="InterPro" id="IPR006151">
    <property type="entry name" value="Shikm_DH/Glu-tRNA_Rdtase"/>
</dbReference>
<dbReference type="NCBIfam" id="TIGR01035">
    <property type="entry name" value="hemA"/>
    <property type="match status" value="1"/>
</dbReference>
<dbReference type="PANTHER" id="PTHR43013">
    <property type="entry name" value="GLUTAMYL-TRNA REDUCTASE"/>
    <property type="match status" value="1"/>
</dbReference>
<dbReference type="PANTHER" id="PTHR43013:SF1">
    <property type="entry name" value="GLUTAMYL-TRNA REDUCTASE"/>
    <property type="match status" value="1"/>
</dbReference>
<dbReference type="Pfam" id="PF00745">
    <property type="entry name" value="GlutR_dimer"/>
    <property type="match status" value="1"/>
</dbReference>
<dbReference type="Pfam" id="PF05201">
    <property type="entry name" value="GlutR_N"/>
    <property type="match status" value="1"/>
</dbReference>
<dbReference type="Pfam" id="PF01488">
    <property type="entry name" value="Shikimate_DH"/>
    <property type="match status" value="1"/>
</dbReference>
<dbReference type="PIRSF" id="PIRSF000445">
    <property type="entry name" value="4pyrrol_synth_GluRdtase"/>
    <property type="match status" value="1"/>
</dbReference>
<dbReference type="SUPFAM" id="SSF69742">
    <property type="entry name" value="Glutamyl tRNA-reductase catalytic, N-terminal domain"/>
    <property type="match status" value="1"/>
</dbReference>
<dbReference type="SUPFAM" id="SSF69075">
    <property type="entry name" value="Glutamyl tRNA-reductase dimerization domain"/>
    <property type="match status" value="1"/>
</dbReference>
<dbReference type="SUPFAM" id="SSF51735">
    <property type="entry name" value="NAD(P)-binding Rossmann-fold domains"/>
    <property type="match status" value="1"/>
</dbReference>
<dbReference type="PROSITE" id="PS00747">
    <property type="entry name" value="GLUTR"/>
    <property type="match status" value="1"/>
</dbReference>
<reference key="1">
    <citation type="journal article" date="2003" name="Proc. Natl. Acad. Sci. U.S.A.">
        <title>Complete genome sequence of the marine planctomycete Pirellula sp. strain 1.</title>
        <authorList>
            <person name="Gloeckner F.O."/>
            <person name="Kube M."/>
            <person name="Bauer M."/>
            <person name="Teeling H."/>
            <person name="Lombardot T."/>
            <person name="Ludwig W."/>
            <person name="Gade D."/>
            <person name="Beck A."/>
            <person name="Borzym K."/>
            <person name="Heitmann K."/>
            <person name="Rabus R."/>
            <person name="Schlesner H."/>
            <person name="Amann R."/>
            <person name="Reinhardt R."/>
        </authorList>
    </citation>
    <scope>NUCLEOTIDE SEQUENCE [LARGE SCALE GENOMIC DNA]</scope>
    <source>
        <strain>DSM 10527 / NCIMB 13988 / SH1</strain>
    </source>
</reference>
<accession>Q7UKZ2</accession>
<organism>
    <name type="scientific">Rhodopirellula baltica (strain DSM 10527 / NCIMB 13988 / SH1)</name>
    <dbReference type="NCBI Taxonomy" id="243090"/>
    <lineage>
        <taxon>Bacteria</taxon>
        <taxon>Pseudomonadati</taxon>
        <taxon>Planctomycetota</taxon>
        <taxon>Planctomycetia</taxon>
        <taxon>Pirellulales</taxon>
        <taxon>Pirellulaceae</taxon>
        <taxon>Rhodopirellula</taxon>
    </lineage>
</organism>
<sequence length="426" mass="47322">MTLKMIGCSHHDAAVEIREQLSFTENEINRTFELFGQRFADAELVLLSTCNRVELYGAGSNPASLQSDDLIDLVADCLNQSRDFVANHMIIREGREAVEHLFLVAASLDSMVVGEAQILSQVKQSYDLANDADRTGPITHGVFQAANRTAKRVQTETSIHRRRLSVPSVAIGEVVPEVFNRLQGKRVVLCGAGEMAEETLRYLKNGGANNLCVVNRSLDRAQKLADEFGADAESMDSLHDQIVQADLLIGTTSAEEPIVDASTFAALNAKRGGRIMLVLDLAVPRDFDPVIGDEPGVYLYQIDDLQAACNRNRREREKQWPKAKKIIDEEVDGFFQSLQQRATGPVIRRLRERADKVKAEELQRLFGKLNGSTDTAMQKEIEKSFDRLTNKLLHPPMASLRDDAADGHSRGLLEALRHLFNLGEDS</sequence>
<protein>
    <recommendedName>
        <fullName evidence="1">Glutamyl-tRNA reductase</fullName>
        <shortName evidence="1">GluTR</shortName>
        <ecNumber evidence="1">1.2.1.70</ecNumber>
    </recommendedName>
</protein>
<gene>
    <name evidence="1" type="primary">hemA</name>
    <name type="ordered locus">RB9848</name>
</gene>
<evidence type="ECO:0000255" key="1">
    <source>
        <dbReference type="HAMAP-Rule" id="MF_00087"/>
    </source>
</evidence>
<feature type="chain" id="PRO_0000114062" description="Glutamyl-tRNA reductase">
    <location>
        <begin position="1"/>
        <end position="426"/>
    </location>
</feature>
<feature type="active site" description="Nucleophile" evidence="1">
    <location>
        <position position="50"/>
    </location>
</feature>
<feature type="binding site" evidence="1">
    <location>
        <begin position="49"/>
        <end position="52"/>
    </location>
    <ligand>
        <name>substrate</name>
    </ligand>
</feature>
<feature type="binding site" evidence="1">
    <location>
        <position position="110"/>
    </location>
    <ligand>
        <name>substrate</name>
    </ligand>
</feature>
<feature type="binding site" evidence="1">
    <location>
        <begin position="115"/>
        <end position="117"/>
    </location>
    <ligand>
        <name>substrate</name>
    </ligand>
</feature>
<feature type="binding site" evidence="1">
    <location>
        <position position="121"/>
    </location>
    <ligand>
        <name>substrate</name>
    </ligand>
</feature>
<feature type="binding site" evidence="1">
    <location>
        <begin position="191"/>
        <end position="196"/>
    </location>
    <ligand>
        <name>NADP(+)</name>
        <dbReference type="ChEBI" id="CHEBI:58349"/>
    </ligand>
</feature>
<feature type="site" description="Important for activity" evidence="1">
    <location>
        <position position="100"/>
    </location>
</feature>
<keyword id="KW-0521">NADP</keyword>
<keyword id="KW-0560">Oxidoreductase</keyword>
<keyword id="KW-0627">Porphyrin biosynthesis</keyword>
<keyword id="KW-1185">Reference proteome</keyword>
<proteinExistence type="inferred from homology"/>
<comment type="function">
    <text evidence="1">Catalyzes the NADPH-dependent reduction of glutamyl-tRNA(Glu) to glutamate 1-semialdehyde (GSA).</text>
</comment>
<comment type="catalytic activity">
    <reaction evidence="1">
        <text>(S)-4-amino-5-oxopentanoate + tRNA(Glu) + NADP(+) = L-glutamyl-tRNA(Glu) + NADPH + H(+)</text>
        <dbReference type="Rhea" id="RHEA:12344"/>
        <dbReference type="Rhea" id="RHEA-COMP:9663"/>
        <dbReference type="Rhea" id="RHEA-COMP:9680"/>
        <dbReference type="ChEBI" id="CHEBI:15378"/>
        <dbReference type="ChEBI" id="CHEBI:57501"/>
        <dbReference type="ChEBI" id="CHEBI:57783"/>
        <dbReference type="ChEBI" id="CHEBI:58349"/>
        <dbReference type="ChEBI" id="CHEBI:78442"/>
        <dbReference type="ChEBI" id="CHEBI:78520"/>
        <dbReference type="EC" id="1.2.1.70"/>
    </reaction>
</comment>
<comment type="pathway">
    <text evidence="1">Porphyrin-containing compound metabolism; protoporphyrin-IX biosynthesis; 5-aminolevulinate from L-glutamyl-tRNA(Glu): step 1/2.</text>
</comment>
<comment type="subunit">
    <text evidence="1">Homodimer.</text>
</comment>
<comment type="domain">
    <text evidence="1">Possesses an unusual extended V-shaped dimeric structure with each monomer consisting of three distinct domains arranged along a curved 'spinal' alpha-helix. The N-terminal catalytic domain specifically recognizes the glutamate moiety of the substrate. The second domain is the NADPH-binding domain, and the third C-terminal domain is responsible for dimerization.</text>
</comment>
<comment type="miscellaneous">
    <text evidence="1">During catalysis, the active site Cys acts as a nucleophile attacking the alpha-carbonyl group of tRNA-bound glutamate with the formation of a thioester intermediate between enzyme and glutamate, and the concomitant release of tRNA(Glu). The thioester intermediate is finally reduced by direct hydride transfer from NADPH, to form the product GSA.</text>
</comment>
<comment type="similarity">
    <text evidence="1">Belongs to the glutamyl-tRNA reductase family.</text>
</comment>